<keyword id="KW-0963">Cytoplasm</keyword>
<keyword id="KW-1185">Reference proteome</keyword>
<keyword id="KW-0694">RNA-binding</keyword>
<organism>
    <name type="scientific">Prochlorococcus marinus (strain MIT 9301)</name>
    <dbReference type="NCBI Taxonomy" id="167546"/>
    <lineage>
        <taxon>Bacteria</taxon>
        <taxon>Bacillati</taxon>
        <taxon>Cyanobacteriota</taxon>
        <taxon>Cyanophyceae</taxon>
        <taxon>Synechococcales</taxon>
        <taxon>Prochlorococcaceae</taxon>
        <taxon>Prochlorococcus</taxon>
    </lineage>
</organism>
<protein>
    <recommendedName>
        <fullName evidence="1">SsrA-binding protein</fullName>
    </recommendedName>
    <alternativeName>
        <fullName evidence="1">Small protein B</fullName>
    </alternativeName>
</protein>
<accession>A3PFA6</accession>
<proteinExistence type="inferred from homology"/>
<sequence length="164" mass="18704">MAKNSKKVKSNTNKANNFKLLAENRYAKFQYAISETIEAGIELLGTEVKSIRNGKANLRDGYCSFRDGEILLLNVHISPHKNVGSFFNHDPLRNRKLLLHKKEIIKMKSNTEKKGMTIVPLSLYLKGSWIKITLGVGKGKKLHDKRQDEKQKSIKKEINSALKR</sequence>
<comment type="function">
    <text evidence="1">Required for rescue of stalled ribosomes mediated by trans-translation. Binds to transfer-messenger RNA (tmRNA), required for stable association of tmRNA with ribosomes. tmRNA and SmpB together mimic tRNA shape, replacing the anticodon stem-loop with SmpB. tmRNA is encoded by the ssrA gene; the 2 termini fold to resemble tRNA(Ala) and it encodes a 'tag peptide', a short internal open reading frame. During trans-translation Ala-aminoacylated tmRNA acts like a tRNA, entering the A-site of stalled ribosomes, displacing the stalled mRNA. The ribosome then switches to translate the ORF on the tmRNA; the nascent peptide is terminated with the 'tag peptide' encoded by the tmRNA and targeted for degradation. The ribosome is freed to recommence translation, which seems to be the essential function of trans-translation.</text>
</comment>
<comment type="subcellular location">
    <subcellularLocation>
        <location evidence="1">Cytoplasm</location>
    </subcellularLocation>
    <text evidence="1">The tmRNA-SmpB complex associates with stalled 70S ribosomes.</text>
</comment>
<comment type="similarity">
    <text evidence="1">Belongs to the SmpB family.</text>
</comment>
<gene>
    <name evidence="1" type="primary">smpB</name>
    <name type="ordered locus">P9301_18081</name>
</gene>
<name>SSRP_PROM0</name>
<reference key="1">
    <citation type="journal article" date="2007" name="PLoS Genet.">
        <title>Patterns and implications of gene gain and loss in the evolution of Prochlorococcus.</title>
        <authorList>
            <person name="Kettler G.C."/>
            <person name="Martiny A.C."/>
            <person name="Huang K."/>
            <person name="Zucker J."/>
            <person name="Coleman M.L."/>
            <person name="Rodrigue S."/>
            <person name="Chen F."/>
            <person name="Lapidus A."/>
            <person name="Ferriera S."/>
            <person name="Johnson J."/>
            <person name="Steglich C."/>
            <person name="Church G.M."/>
            <person name="Richardson P."/>
            <person name="Chisholm S.W."/>
        </authorList>
    </citation>
    <scope>NUCLEOTIDE SEQUENCE [LARGE SCALE GENOMIC DNA]</scope>
    <source>
        <strain>MIT 9301</strain>
    </source>
</reference>
<dbReference type="EMBL" id="CP000576">
    <property type="protein sequence ID" value="ABO18431.1"/>
    <property type="molecule type" value="Genomic_DNA"/>
</dbReference>
<dbReference type="RefSeq" id="WP_011863716.1">
    <property type="nucleotide sequence ID" value="NC_009091.1"/>
</dbReference>
<dbReference type="SMR" id="A3PFA6"/>
<dbReference type="STRING" id="167546.P9301_18081"/>
<dbReference type="KEGG" id="pmg:P9301_18081"/>
<dbReference type="eggNOG" id="COG0691">
    <property type="taxonomic scope" value="Bacteria"/>
</dbReference>
<dbReference type="HOGENOM" id="CLU_108953_0_1_3"/>
<dbReference type="OrthoDB" id="9805462at2"/>
<dbReference type="Proteomes" id="UP000001430">
    <property type="component" value="Chromosome"/>
</dbReference>
<dbReference type="GO" id="GO:0005829">
    <property type="term" value="C:cytosol"/>
    <property type="evidence" value="ECO:0007669"/>
    <property type="project" value="TreeGrafter"/>
</dbReference>
<dbReference type="GO" id="GO:0003723">
    <property type="term" value="F:RNA binding"/>
    <property type="evidence" value="ECO:0007669"/>
    <property type="project" value="UniProtKB-UniRule"/>
</dbReference>
<dbReference type="GO" id="GO:0070929">
    <property type="term" value="P:trans-translation"/>
    <property type="evidence" value="ECO:0007669"/>
    <property type="project" value="UniProtKB-UniRule"/>
</dbReference>
<dbReference type="CDD" id="cd09294">
    <property type="entry name" value="SmpB"/>
    <property type="match status" value="1"/>
</dbReference>
<dbReference type="Gene3D" id="2.40.280.10">
    <property type="match status" value="1"/>
</dbReference>
<dbReference type="HAMAP" id="MF_00023">
    <property type="entry name" value="SmpB"/>
    <property type="match status" value="1"/>
</dbReference>
<dbReference type="InterPro" id="IPR023620">
    <property type="entry name" value="SmpB"/>
</dbReference>
<dbReference type="InterPro" id="IPR000037">
    <property type="entry name" value="SsrA-bd_prot"/>
</dbReference>
<dbReference type="InterPro" id="IPR020081">
    <property type="entry name" value="SsrA-bd_prot_CS"/>
</dbReference>
<dbReference type="NCBIfam" id="NF003843">
    <property type="entry name" value="PRK05422.1"/>
    <property type="match status" value="1"/>
</dbReference>
<dbReference type="NCBIfam" id="TIGR00086">
    <property type="entry name" value="smpB"/>
    <property type="match status" value="1"/>
</dbReference>
<dbReference type="PANTHER" id="PTHR30308:SF2">
    <property type="entry name" value="SSRA-BINDING PROTEIN"/>
    <property type="match status" value="1"/>
</dbReference>
<dbReference type="PANTHER" id="PTHR30308">
    <property type="entry name" value="TMRNA-BINDING COMPONENT OF TRANS-TRANSLATION TAGGING COMPLEX"/>
    <property type="match status" value="1"/>
</dbReference>
<dbReference type="Pfam" id="PF01668">
    <property type="entry name" value="SmpB"/>
    <property type="match status" value="1"/>
</dbReference>
<dbReference type="SUPFAM" id="SSF74982">
    <property type="entry name" value="Small protein B (SmpB)"/>
    <property type="match status" value="1"/>
</dbReference>
<dbReference type="PROSITE" id="PS01317">
    <property type="entry name" value="SSRP"/>
    <property type="match status" value="1"/>
</dbReference>
<evidence type="ECO:0000255" key="1">
    <source>
        <dbReference type="HAMAP-Rule" id="MF_00023"/>
    </source>
</evidence>
<evidence type="ECO:0000256" key="2">
    <source>
        <dbReference type="SAM" id="MobiDB-lite"/>
    </source>
</evidence>
<feature type="chain" id="PRO_0000331077" description="SsrA-binding protein">
    <location>
        <begin position="1"/>
        <end position="164"/>
    </location>
</feature>
<feature type="region of interest" description="Disordered" evidence="2">
    <location>
        <begin position="141"/>
        <end position="164"/>
    </location>
</feature>
<feature type="compositionally biased region" description="Basic and acidic residues" evidence="2">
    <location>
        <begin position="145"/>
        <end position="158"/>
    </location>
</feature>